<organism>
    <name type="scientific">Agrobacterium fabrum (strain C58 / ATCC 33970)</name>
    <name type="common">Agrobacterium tumefaciens (strain C58)</name>
    <dbReference type="NCBI Taxonomy" id="176299"/>
    <lineage>
        <taxon>Bacteria</taxon>
        <taxon>Pseudomonadati</taxon>
        <taxon>Pseudomonadota</taxon>
        <taxon>Alphaproteobacteria</taxon>
        <taxon>Hyphomicrobiales</taxon>
        <taxon>Rhizobiaceae</taxon>
        <taxon>Rhizobium/Agrobacterium group</taxon>
        <taxon>Agrobacterium</taxon>
        <taxon>Agrobacterium tumefaciens complex</taxon>
    </lineage>
</organism>
<gene>
    <name type="primary">rutA</name>
    <name type="ordered locus">Atu2500</name>
    <name type="ORF">AGR_C_4543</name>
</gene>
<sequence>MEVGVFIPIGNNGWLLSENAPQYKPSFDLNKAITLKAEQYGFDFALSMIKLRGFGGKTEFWDYNLESFTLMAGLAAVTSKIKLFGTAATLVMPPAIVARMATTIDSISGGRFGINLITGWQRPEYSQMGLWPGDDYFGDRYEYLGEYTSVLKELLTEGQSDFKGKFFQMDDCRMKPVPQGDVKLICAGSSNSGMAFSAKFADYSFCFGVGVNTPKAFAPTNERLLAATEKSGREVKSVVLTMVLAEEKSEDAWAKWEHYKAGADEDAIKWLGLQSAVDTKSGSDTNVRHMSNPVSAVNINMGTLIGSYEEVAAMLDEMSEVPGTGGVMLTFDDFLEGVEKFGKYVQPLMKSRQHVLAELEAAE</sequence>
<protein>
    <recommendedName>
        <fullName>Pyrimidine monooxygenase RutA</fullName>
        <ecNumber evidence="1">1.14.99.46</ecNumber>
    </recommendedName>
</protein>
<name>RUTA_AGRFC</name>
<reference key="1">
    <citation type="journal article" date="2001" name="Science">
        <title>The genome of the natural genetic engineer Agrobacterium tumefaciens C58.</title>
        <authorList>
            <person name="Wood D.W."/>
            <person name="Setubal J.C."/>
            <person name="Kaul R."/>
            <person name="Monks D.E."/>
            <person name="Kitajima J.P."/>
            <person name="Okura V.K."/>
            <person name="Zhou Y."/>
            <person name="Chen L."/>
            <person name="Wood G.E."/>
            <person name="Almeida N.F. Jr."/>
            <person name="Woo L."/>
            <person name="Chen Y."/>
            <person name="Paulsen I.T."/>
            <person name="Eisen J.A."/>
            <person name="Karp P.D."/>
            <person name="Bovee D. Sr."/>
            <person name="Chapman P."/>
            <person name="Clendenning J."/>
            <person name="Deatherage G."/>
            <person name="Gillet W."/>
            <person name="Grant C."/>
            <person name="Kutyavin T."/>
            <person name="Levy R."/>
            <person name="Li M.-J."/>
            <person name="McClelland E."/>
            <person name="Palmieri A."/>
            <person name="Raymond C."/>
            <person name="Rouse G."/>
            <person name="Saenphimmachak C."/>
            <person name="Wu Z."/>
            <person name="Romero P."/>
            <person name="Gordon D."/>
            <person name="Zhang S."/>
            <person name="Yoo H."/>
            <person name="Tao Y."/>
            <person name="Biddle P."/>
            <person name="Jung M."/>
            <person name="Krespan W."/>
            <person name="Perry M."/>
            <person name="Gordon-Kamm B."/>
            <person name="Liao L."/>
            <person name="Kim S."/>
            <person name="Hendrick C."/>
            <person name="Zhao Z.-Y."/>
            <person name="Dolan M."/>
            <person name="Chumley F."/>
            <person name="Tingey S.V."/>
            <person name="Tomb J.-F."/>
            <person name="Gordon M.P."/>
            <person name="Olson M.V."/>
            <person name="Nester E.W."/>
        </authorList>
    </citation>
    <scope>NUCLEOTIDE SEQUENCE [LARGE SCALE GENOMIC DNA]</scope>
    <source>
        <strain>C58 / ATCC 33970</strain>
    </source>
</reference>
<reference key="2">
    <citation type="journal article" date="2001" name="Science">
        <title>Genome sequence of the plant pathogen and biotechnology agent Agrobacterium tumefaciens C58.</title>
        <authorList>
            <person name="Goodner B."/>
            <person name="Hinkle G."/>
            <person name="Gattung S."/>
            <person name="Miller N."/>
            <person name="Blanchard M."/>
            <person name="Qurollo B."/>
            <person name="Goldman B.S."/>
            <person name="Cao Y."/>
            <person name="Askenazi M."/>
            <person name="Halling C."/>
            <person name="Mullin L."/>
            <person name="Houmiel K."/>
            <person name="Gordon J."/>
            <person name="Vaudin M."/>
            <person name="Iartchouk O."/>
            <person name="Epp A."/>
            <person name="Liu F."/>
            <person name="Wollam C."/>
            <person name="Allinger M."/>
            <person name="Doughty D."/>
            <person name="Scott C."/>
            <person name="Lappas C."/>
            <person name="Markelz B."/>
            <person name="Flanagan C."/>
            <person name="Crowell C."/>
            <person name="Gurson J."/>
            <person name="Lomo C."/>
            <person name="Sear C."/>
            <person name="Strub G."/>
            <person name="Cielo C."/>
            <person name="Slater S."/>
        </authorList>
    </citation>
    <scope>NUCLEOTIDE SEQUENCE [LARGE SCALE GENOMIC DNA]</scope>
    <source>
        <strain>C58 / ATCC 33970</strain>
    </source>
</reference>
<dbReference type="EC" id="1.14.99.46" evidence="1"/>
<dbReference type="EMBL" id="AE007869">
    <property type="protein sequence ID" value="AAK88232.1"/>
    <property type="molecule type" value="Genomic_DNA"/>
</dbReference>
<dbReference type="PIR" id="AI2883">
    <property type="entry name" value="AI2883"/>
</dbReference>
<dbReference type="PIR" id="G97659">
    <property type="entry name" value="G97659"/>
</dbReference>
<dbReference type="RefSeq" id="NP_355447.1">
    <property type="nucleotide sequence ID" value="NC_003062.2"/>
</dbReference>
<dbReference type="RefSeq" id="WP_006312122.1">
    <property type="nucleotide sequence ID" value="NC_003062.2"/>
</dbReference>
<dbReference type="SMR" id="P58759"/>
<dbReference type="STRING" id="176299.Atu2500"/>
<dbReference type="EnsemblBacteria" id="AAK88232">
    <property type="protein sequence ID" value="AAK88232"/>
    <property type="gene ID" value="Atu2500"/>
</dbReference>
<dbReference type="GeneID" id="1134538"/>
<dbReference type="KEGG" id="atu:Atu2500"/>
<dbReference type="PATRIC" id="fig|176299.10.peg.2512"/>
<dbReference type="eggNOG" id="COG2141">
    <property type="taxonomic scope" value="Bacteria"/>
</dbReference>
<dbReference type="HOGENOM" id="CLU_027853_1_1_5"/>
<dbReference type="OrthoDB" id="9814695at2"/>
<dbReference type="PhylomeDB" id="P58759"/>
<dbReference type="Proteomes" id="UP000000813">
    <property type="component" value="Chromosome circular"/>
</dbReference>
<dbReference type="GO" id="GO:0008726">
    <property type="term" value="F:alkanesulfonate monooxygenase activity"/>
    <property type="evidence" value="ECO:0007669"/>
    <property type="project" value="TreeGrafter"/>
</dbReference>
<dbReference type="GO" id="GO:0004497">
    <property type="term" value="F:monooxygenase activity"/>
    <property type="evidence" value="ECO:0000250"/>
    <property type="project" value="UniProtKB"/>
</dbReference>
<dbReference type="GO" id="GO:0052614">
    <property type="term" value="F:uracil oxygenase activity"/>
    <property type="evidence" value="ECO:0007669"/>
    <property type="project" value="UniProtKB-EC"/>
</dbReference>
<dbReference type="GO" id="GO:0046306">
    <property type="term" value="P:alkanesulfonate catabolic process"/>
    <property type="evidence" value="ECO:0007669"/>
    <property type="project" value="TreeGrafter"/>
</dbReference>
<dbReference type="GO" id="GO:0019740">
    <property type="term" value="P:nitrogen utilization"/>
    <property type="evidence" value="ECO:0007669"/>
    <property type="project" value="UniProtKB-UniRule"/>
</dbReference>
<dbReference type="GO" id="GO:0006212">
    <property type="term" value="P:uracil catabolic process"/>
    <property type="evidence" value="ECO:0007669"/>
    <property type="project" value="UniProtKB-UniRule"/>
</dbReference>
<dbReference type="CDD" id="cd01094">
    <property type="entry name" value="Alkanesulfonate_monoxygenase"/>
    <property type="match status" value="1"/>
</dbReference>
<dbReference type="FunFam" id="3.20.20.30:FF:000003">
    <property type="entry name" value="Pyrimidine monooxygenase RutA"/>
    <property type="match status" value="1"/>
</dbReference>
<dbReference type="Gene3D" id="3.20.20.30">
    <property type="entry name" value="Luciferase-like domain"/>
    <property type="match status" value="1"/>
</dbReference>
<dbReference type="HAMAP" id="MF_01699">
    <property type="entry name" value="RutA"/>
    <property type="match status" value="1"/>
</dbReference>
<dbReference type="InterPro" id="IPR011251">
    <property type="entry name" value="Luciferase-like_dom"/>
</dbReference>
<dbReference type="InterPro" id="IPR036661">
    <property type="entry name" value="Luciferase-like_sf"/>
</dbReference>
<dbReference type="InterPro" id="IPR019914">
    <property type="entry name" value="Pyrimidine_monooxygenase_RutA"/>
</dbReference>
<dbReference type="InterPro" id="IPR050172">
    <property type="entry name" value="SsuD_RutA_monooxygenase"/>
</dbReference>
<dbReference type="NCBIfam" id="TIGR03612">
    <property type="entry name" value="RutA"/>
    <property type="match status" value="1"/>
</dbReference>
<dbReference type="PANTHER" id="PTHR42847">
    <property type="entry name" value="ALKANESULFONATE MONOOXYGENASE"/>
    <property type="match status" value="1"/>
</dbReference>
<dbReference type="PANTHER" id="PTHR42847:SF4">
    <property type="entry name" value="ALKANESULFONATE MONOOXYGENASE-RELATED"/>
    <property type="match status" value="1"/>
</dbReference>
<dbReference type="Pfam" id="PF00296">
    <property type="entry name" value="Bac_luciferase"/>
    <property type="match status" value="1"/>
</dbReference>
<dbReference type="SUPFAM" id="SSF51679">
    <property type="entry name" value="Bacterial luciferase-like"/>
    <property type="match status" value="1"/>
</dbReference>
<proteinExistence type="inferred from homology"/>
<keyword id="KW-0285">Flavoprotein</keyword>
<keyword id="KW-0288">FMN</keyword>
<keyword id="KW-0503">Monooxygenase</keyword>
<keyword id="KW-0521">NADP</keyword>
<keyword id="KW-0560">Oxidoreductase</keyword>
<keyword id="KW-1185">Reference proteome</keyword>
<feature type="chain" id="PRO_0000197035" description="Pyrimidine monooxygenase RutA">
    <location>
        <begin position="1"/>
        <end position="363"/>
    </location>
</feature>
<feature type="binding site" evidence="2">
    <location>
        <begin position="49"/>
        <end position="50"/>
    </location>
    <ligand>
        <name>FMN</name>
        <dbReference type="ChEBI" id="CHEBI:58210"/>
    </ligand>
</feature>
<feature type="binding site" evidence="2">
    <location>
        <position position="115"/>
    </location>
    <ligand>
        <name>FMN</name>
        <dbReference type="ChEBI" id="CHEBI:58210"/>
    </ligand>
</feature>
<feature type="binding site" evidence="2">
    <location>
        <position position="124"/>
    </location>
    <ligand>
        <name>FMN</name>
        <dbReference type="ChEBI" id="CHEBI:58210"/>
    </ligand>
</feature>
<feature type="binding site" evidence="2">
    <location>
        <begin position="140"/>
        <end position="141"/>
    </location>
    <ligand>
        <name>FMN</name>
        <dbReference type="ChEBI" id="CHEBI:58210"/>
    </ligand>
</feature>
<feature type="binding site" evidence="2">
    <location>
        <position position="190"/>
    </location>
    <ligand>
        <name>FMN</name>
        <dbReference type="ChEBI" id="CHEBI:58210"/>
    </ligand>
</feature>
<accession>P58759</accession>
<evidence type="ECO:0000250" key="1">
    <source>
        <dbReference type="UniProtKB" id="P75898"/>
    </source>
</evidence>
<evidence type="ECO:0000255" key="2"/>
<evidence type="ECO:0000305" key="3"/>
<comment type="function">
    <text evidence="1">Catalyzes the pyrimidine ring opening between N-3 and C-4 by an unusual flavin hydroperoxide-catalyzed mechanism, adding oxygen atoms in the process to yield ureidoacrylate peracid, that immediately reacts with FMN forming ureidoacrylate and FMN-N(5)-oxide. The FMN-N(5)-oxide reacts spontaneously with NADH to produce FMN. Requires the flavin reductase RutF to regenerate FMN in vivo.</text>
</comment>
<comment type="catalytic activity">
    <reaction>
        <text>uracil + FMNH2 + NADH + O2 = (Z)-3-ureidoacrylate + FMN + NAD(+) + H2O + H(+)</text>
        <dbReference type="Rhea" id="RHEA:31587"/>
        <dbReference type="ChEBI" id="CHEBI:15377"/>
        <dbReference type="ChEBI" id="CHEBI:15378"/>
        <dbReference type="ChEBI" id="CHEBI:15379"/>
        <dbReference type="ChEBI" id="CHEBI:17568"/>
        <dbReference type="ChEBI" id="CHEBI:57540"/>
        <dbReference type="ChEBI" id="CHEBI:57618"/>
        <dbReference type="ChEBI" id="CHEBI:57945"/>
        <dbReference type="ChEBI" id="CHEBI:58210"/>
        <dbReference type="ChEBI" id="CHEBI:59891"/>
        <dbReference type="EC" id="1.14.99.46"/>
    </reaction>
</comment>
<comment type="catalytic activity">
    <reaction>
        <text>thymine + FMNH2 + NADH + O2 = (Z)-2-methylureidoacrylate + FMN + NAD(+) + H2O + H(+)</text>
        <dbReference type="Rhea" id="RHEA:31599"/>
        <dbReference type="ChEBI" id="CHEBI:15377"/>
        <dbReference type="ChEBI" id="CHEBI:15378"/>
        <dbReference type="ChEBI" id="CHEBI:15379"/>
        <dbReference type="ChEBI" id="CHEBI:17821"/>
        <dbReference type="ChEBI" id="CHEBI:57540"/>
        <dbReference type="ChEBI" id="CHEBI:57618"/>
        <dbReference type="ChEBI" id="CHEBI:57945"/>
        <dbReference type="ChEBI" id="CHEBI:58210"/>
        <dbReference type="ChEBI" id="CHEBI:143783"/>
        <dbReference type="EC" id="1.14.99.46"/>
    </reaction>
</comment>
<comment type="similarity">
    <text evidence="3">Belongs to the NtaA/SnaA/DszA monooxygenase family. RutA subfamily.</text>
</comment>